<comment type="function">
    <text evidence="1">Together with its co-chaperonin GroES, plays an essential role in assisting protein folding. The GroEL-GroES system forms a nano-cage that allows encapsulation of the non-native substrate proteins and provides a physical environment optimized to promote and accelerate protein folding.</text>
</comment>
<comment type="catalytic activity">
    <reaction evidence="1">
        <text>ATP + H2O + a folded polypeptide = ADP + phosphate + an unfolded polypeptide.</text>
        <dbReference type="EC" id="5.6.1.7"/>
    </reaction>
</comment>
<comment type="subunit">
    <text evidence="1">Forms a cylinder of 14 subunits composed of two heptameric rings stacked back-to-back. Interacts with the co-chaperonin GroES.</text>
</comment>
<comment type="subcellular location">
    <subcellularLocation>
        <location evidence="1">Cytoplasm</location>
    </subcellularLocation>
</comment>
<comment type="similarity">
    <text evidence="1">Belongs to the chaperonin (HSP60) family.</text>
</comment>
<protein>
    <recommendedName>
        <fullName evidence="1">Chaperonin GroEL</fullName>
        <ecNumber evidence="1">5.6.1.7</ecNumber>
    </recommendedName>
    <alternativeName>
        <fullName evidence="1">60 kDa chaperonin</fullName>
    </alternativeName>
    <alternativeName>
        <fullName evidence="1">Chaperonin-60</fullName>
        <shortName evidence="1">Cpn60</shortName>
    </alternativeName>
</protein>
<name>CH60_SHEB8</name>
<sequence length="545" mass="57095">MAAKEVVFGNDARVRMLAGVNILANAVKVTLGPKGRNVVLDKSFGSPLITKDGVSVAKEIELEDKFENMGAQMVKEVASKANDAAGDGTTTATVLAQAIVVEGLKAVAAGMNPMDLKRGIDKAVIAAVAELKALSQPCADSKAIAQVATISANSDESIGEIIATAMEKVGKEGVITVEEGQALENELDVVEGMQFDRGYLSPYFINKPETGSVELDHPFVLLVDKKISNIRELLPILEGLAKTGKPLLIVAEDVEGEALATLVVNNMRGIVKVAAVKAPGFGDRRKAMLQDVAILTGGTVIAEEIGLELEKATLEDLGTAKRVVITKDNTTIIDGNGEQTQIAARVSQIKQQVEESTSDYDKEKLQERMAKLAGGVAVIKVGAATEVEMKEKKARVEDALHATRAAVEEGVVPGGGVALVRVASKIADVEVLNEDQKHGVVIALRAMEAPLRQIATNAGEEASVVANTVKNGSGNYGYNAGNDTYGDMLEMGILDPTKVTRCALQFAASIAGLMITTEAMVAEIPQNASQDMGGMGGMGGMGGMM</sequence>
<dbReference type="EC" id="5.6.1.7" evidence="1"/>
<dbReference type="EMBL" id="CP000753">
    <property type="protein sequence ID" value="ABS06806.1"/>
    <property type="molecule type" value="Genomic_DNA"/>
</dbReference>
<dbReference type="RefSeq" id="WP_012088209.1">
    <property type="nucleotide sequence ID" value="NC_009665.1"/>
</dbReference>
<dbReference type="SMR" id="A6WJ17"/>
<dbReference type="KEGG" id="sbm:Shew185_0645"/>
<dbReference type="HOGENOM" id="CLU_016503_3_0_6"/>
<dbReference type="GO" id="GO:0005737">
    <property type="term" value="C:cytoplasm"/>
    <property type="evidence" value="ECO:0007669"/>
    <property type="project" value="UniProtKB-SubCell"/>
</dbReference>
<dbReference type="GO" id="GO:0005524">
    <property type="term" value="F:ATP binding"/>
    <property type="evidence" value="ECO:0007669"/>
    <property type="project" value="UniProtKB-UniRule"/>
</dbReference>
<dbReference type="GO" id="GO:0140662">
    <property type="term" value="F:ATP-dependent protein folding chaperone"/>
    <property type="evidence" value="ECO:0007669"/>
    <property type="project" value="InterPro"/>
</dbReference>
<dbReference type="GO" id="GO:0016853">
    <property type="term" value="F:isomerase activity"/>
    <property type="evidence" value="ECO:0007669"/>
    <property type="project" value="UniProtKB-KW"/>
</dbReference>
<dbReference type="GO" id="GO:0051082">
    <property type="term" value="F:unfolded protein binding"/>
    <property type="evidence" value="ECO:0007669"/>
    <property type="project" value="UniProtKB-UniRule"/>
</dbReference>
<dbReference type="GO" id="GO:0042026">
    <property type="term" value="P:protein refolding"/>
    <property type="evidence" value="ECO:0007669"/>
    <property type="project" value="UniProtKB-UniRule"/>
</dbReference>
<dbReference type="CDD" id="cd03344">
    <property type="entry name" value="GroEL"/>
    <property type="match status" value="1"/>
</dbReference>
<dbReference type="FunFam" id="1.10.560.10:FF:000001">
    <property type="entry name" value="60 kDa chaperonin"/>
    <property type="match status" value="1"/>
</dbReference>
<dbReference type="FunFam" id="3.50.7.10:FF:000001">
    <property type="entry name" value="60 kDa chaperonin"/>
    <property type="match status" value="1"/>
</dbReference>
<dbReference type="Gene3D" id="3.50.7.10">
    <property type="entry name" value="GroEL"/>
    <property type="match status" value="1"/>
</dbReference>
<dbReference type="Gene3D" id="1.10.560.10">
    <property type="entry name" value="GroEL-like equatorial domain"/>
    <property type="match status" value="1"/>
</dbReference>
<dbReference type="Gene3D" id="3.30.260.10">
    <property type="entry name" value="TCP-1-like chaperonin intermediate domain"/>
    <property type="match status" value="1"/>
</dbReference>
<dbReference type="HAMAP" id="MF_00600">
    <property type="entry name" value="CH60"/>
    <property type="match status" value="1"/>
</dbReference>
<dbReference type="InterPro" id="IPR018370">
    <property type="entry name" value="Chaperonin_Cpn60_CS"/>
</dbReference>
<dbReference type="InterPro" id="IPR001844">
    <property type="entry name" value="Cpn60/GroEL"/>
</dbReference>
<dbReference type="InterPro" id="IPR002423">
    <property type="entry name" value="Cpn60/GroEL/TCP-1"/>
</dbReference>
<dbReference type="InterPro" id="IPR027409">
    <property type="entry name" value="GroEL-like_apical_dom_sf"/>
</dbReference>
<dbReference type="InterPro" id="IPR027413">
    <property type="entry name" value="GROEL-like_equatorial_sf"/>
</dbReference>
<dbReference type="InterPro" id="IPR027410">
    <property type="entry name" value="TCP-1-like_intermed_sf"/>
</dbReference>
<dbReference type="NCBIfam" id="TIGR02348">
    <property type="entry name" value="GroEL"/>
    <property type="match status" value="1"/>
</dbReference>
<dbReference type="NCBIfam" id="NF000592">
    <property type="entry name" value="PRK00013.1"/>
    <property type="match status" value="1"/>
</dbReference>
<dbReference type="NCBIfam" id="NF009487">
    <property type="entry name" value="PRK12849.1"/>
    <property type="match status" value="1"/>
</dbReference>
<dbReference type="NCBIfam" id="NF009488">
    <property type="entry name" value="PRK12850.1"/>
    <property type="match status" value="1"/>
</dbReference>
<dbReference type="NCBIfam" id="NF009489">
    <property type="entry name" value="PRK12851.1"/>
    <property type="match status" value="1"/>
</dbReference>
<dbReference type="PANTHER" id="PTHR45633">
    <property type="entry name" value="60 KDA HEAT SHOCK PROTEIN, MITOCHONDRIAL"/>
    <property type="match status" value="1"/>
</dbReference>
<dbReference type="Pfam" id="PF00118">
    <property type="entry name" value="Cpn60_TCP1"/>
    <property type="match status" value="1"/>
</dbReference>
<dbReference type="PRINTS" id="PR00298">
    <property type="entry name" value="CHAPERONIN60"/>
</dbReference>
<dbReference type="SUPFAM" id="SSF52029">
    <property type="entry name" value="GroEL apical domain-like"/>
    <property type="match status" value="1"/>
</dbReference>
<dbReference type="SUPFAM" id="SSF48592">
    <property type="entry name" value="GroEL equatorial domain-like"/>
    <property type="match status" value="2"/>
</dbReference>
<dbReference type="PROSITE" id="PS00296">
    <property type="entry name" value="CHAPERONINS_CPN60"/>
    <property type="match status" value="1"/>
</dbReference>
<organism>
    <name type="scientific">Shewanella baltica (strain OS185)</name>
    <dbReference type="NCBI Taxonomy" id="402882"/>
    <lineage>
        <taxon>Bacteria</taxon>
        <taxon>Pseudomonadati</taxon>
        <taxon>Pseudomonadota</taxon>
        <taxon>Gammaproteobacteria</taxon>
        <taxon>Alteromonadales</taxon>
        <taxon>Shewanellaceae</taxon>
        <taxon>Shewanella</taxon>
    </lineage>
</organism>
<reference key="1">
    <citation type="submission" date="2007-07" db="EMBL/GenBank/DDBJ databases">
        <title>Complete sequence of chromosome of Shewanella baltica OS185.</title>
        <authorList>
            <consortium name="US DOE Joint Genome Institute"/>
            <person name="Copeland A."/>
            <person name="Lucas S."/>
            <person name="Lapidus A."/>
            <person name="Barry K."/>
            <person name="Glavina del Rio T."/>
            <person name="Dalin E."/>
            <person name="Tice H."/>
            <person name="Pitluck S."/>
            <person name="Sims D."/>
            <person name="Brettin T."/>
            <person name="Bruce D."/>
            <person name="Detter J.C."/>
            <person name="Han C."/>
            <person name="Schmutz J."/>
            <person name="Larimer F."/>
            <person name="Land M."/>
            <person name="Hauser L."/>
            <person name="Kyrpides N."/>
            <person name="Mikhailova N."/>
            <person name="Brettar I."/>
            <person name="Rodrigues J."/>
            <person name="Konstantinidis K."/>
            <person name="Tiedje J."/>
            <person name="Richardson P."/>
        </authorList>
    </citation>
    <scope>NUCLEOTIDE SEQUENCE [LARGE SCALE GENOMIC DNA]</scope>
    <source>
        <strain>OS185</strain>
    </source>
</reference>
<proteinExistence type="inferred from homology"/>
<feature type="chain" id="PRO_0000332075" description="Chaperonin GroEL">
    <location>
        <begin position="1"/>
        <end position="545"/>
    </location>
</feature>
<feature type="binding site" evidence="1">
    <location>
        <begin position="30"/>
        <end position="33"/>
    </location>
    <ligand>
        <name>ATP</name>
        <dbReference type="ChEBI" id="CHEBI:30616"/>
    </ligand>
</feature>
<feature type="binding site" evidence="1">
    <location>
        <position position="51"/>
    </location>
    <ligand>
        <name>ATP</name>
        <dbReference type="ChEBI" id="CHEBI:30616"/>
    </ligand>
</feature>
<feature type="binding site" evidence="1">
    <location>
        <begin position="87"/>
        <end position="91"/>
    </location>
    <ligand>
        <name>ATP</name>
        <dbReference type="ChEBI" id="CHEBI:30616"/>
    </ligand>
</feature>
<feature type="binding site" evidence="1">
    <location>
        <position position="415"/>
    </location>
    <ligand>
        <name>ATP</name>
        <dbReference type="ChEBI" id="CHEBI:30616"/>
    </ligand>
</feature>
<feature type="binding site" evidence="1">
    <location>
        <position position="495"/>
    </location>
    <ligand>
        <name>ATP</name>
        <dbReference type="ChEBI" id="CHEBI:30616"/>
    </ligand>
</feature>
<keyword id="KW-0067">ATP-binding</keyword>
<keyword id="KW-0143">Chaperone</keyword>
<keyword id="KW-0963">Cytoplasm</keyword>
<keyword id="KW-0413">Isomerase</keyword>
<keyword id="KW-0547">Nucleotide-binding</keyword>
<gene>
    <name evidence="1" type="primary">groEL</name>
    <name evidence="1" type="synonym">groL</name>
    <name type="ordered locus">Shew185_0645</name>
</gene>
<evidence type="ECO:0000255" key="1">
    <source>
        <dbReference type="HAMAP-Rule" id="MF_00600"/>
    </source>
</evidence>
<accession>A6WJ17</accession>